<comment type="function">
    <text evidence="1">Involved in mRNA degradation. Catalyzes the phosphorolysis of single-stranded polyribonucleotides processively in the 3'- to 5'-direction.</text>
</comment>
<comment type="catalytic activity">
    <reaction evidence="1">
        <text>RNA(n+1) + phosphate = RNA(n) + a ribonucleoside 5'-diphosphate</text>
        <dbReference type="Rhea" id="RHEA:22096"/>
        <dbReference type="Rhea" id="RHEA-COMP:14527"/>
        <dbReference type="Rhea" id="RHEA-COMP:17342"/>
        <dbReference type="ChEBI" id="CHEBI:43474"/>
        <dbReference type="ChEBI" id="CHEBI:57930"/>
        <dbReference type="ChEBI" id="CHEBI:140395"/>
        <dbReference type="EC" id="2.7.7.8"/>
    </reaction>
</comment>
<comment type="cofactor">
    <cofactor evidence="1">
        <name>Mg(2+)</name>
        <dbReference type="ChEBI" id="CHEBI:18420"/>
    </cofactor>
</comment>
<comment type="subcellular location">
    <subcellularLocation>
        <location evidence="1">Cytoplasm</location>
    </subcellularLocation>
</comment>
<comment type="similarity">
    <text evidence="1">Belongs to the polyribonucleotide nucleotidyltransferase family.</text>
</comment>
<reference key="1">
    <citation type="journal article" date="2010" name="Genome Biol.">
        <title>Structure and dynamics of the pan-genome of Streptococcus pneumoniae and closely related species.</title>
        <authorList>
            <person name="Donati C."/>
            <person name="Hiller N.L."/>
            <person name="Tettelin H."/>
            <person name="Muzzi A."/>
            <person name="Croucher N.J."/>
            <person name="Angiuoli S.V."/>
            <person name="Oggioni M."/>
            <person name="Dunning Hotopp J.C."/>
            <person name="Hu F.Z."/>
            <person name="Riley D.R."/>
            <person name="Covacci A."/>
            <person name="Mitchell T.J."/>
            <person name="Bentley S.D."/>
            <person name="Kilian M."/>
            <person name="Ehrlich G.D."/>
            <person name="Rappuoli R."/>
            <person name="Moxon E.R."/>
            <person name="Masignani V."/>
        </authorList>
    </citation>
    <scope>NUCLEOTIDE SEQUENCE [LARGE SCALE GENOMIC DNA]</scope>
    <source>
        <strain>Hungary19A-6</strain>
    </source>
</reference>
<organism>
    <name type="scientific">Streptococcus pneumoniae (strain Hungary19A-6)</name>
    <dbReference type="NCBI Taxonomy" id="487214"/>
    <lineage>
        <taxon>Bacteria</taxon>
        <taxon>Bacillati</taxon>
        <taxon>Bacillota</taxon>
        <taxon>Bacilli</taxon>
        <taxon>Lactobacillales</taxon>
        <taxon>Streptococcaceae</taxon>
        <taxon>Streptococcus</taxon>
    </lineage>
</organism>
<evidence type="ECO:0000255" key="1">
    <source>
        <dbReference type="HAMAP-Rule" id="MF_01595"/>
    </source>
</evidence>
<evidence type="ECO:0000256" key="2">
    <source>
        <dbReference type="SAM" id="MobiDB-lite"/>
    </source>
</evidence>
<sequence>MAKQVFQTTFAGRELIVETGQVAKQANGSVVVRYGESTVLTAAVMSKKMATGDFFPLQVNYEEKMYAAGKFPGGFMKREGRPSTDATLTARLIDRPIRPMFAEGFRNEVQVINTVLSYDENASAPMAAMFGSSLALSISDIPFDGPIAGVQVGYVDGQIIINPSQEQAEQSLLELTVAGTKHAINMVESGAKELSEEIMLEALLKGHEAVKELIAFQEEIVAAVGKEKAEVELLHVDADLQAEIIAAYNSDLQKAVQVEEKLAREAATQTVKDQVIAVYEEKYADHEEFDRIMRDVAEILEQMEHAEVRRLITEDKVRPDGRKVDEIRPLDAVVDFLPRVHGSGLFTRGQTQALSVLTLAPMGETQIIDGLDPEYKKRFMHHYNFPQYSVGETGRYGAPGRREIGHGALGERALAQVLPSLEEFPYAIRLVAEVLESNGSSSQASICAGTLALMAGGVPIKAPVAGIAMGLISDGNNYTVLTDIQGLEDHFGDMDFKVAGTRDGITALQMDIKIQGITAEILTEALAQAKKARFEILDVIEATIPEVRPELAPTAPKIDTIKIDVDKIKIVIGKGGETIDKIIAETGVKIDIDEEGNVSIYSSDQDAINRAKEIIAGLVREAKVDEVYRAKVVRIEKFGAFVNLFDKTDALVHISEMAWTRTNNVEDLVAIGDEVDVKVIKIDEKGRVDASMKALLPRPPKPERDEKGEKSERPYRPRHHKDHKPKKEITETPKDSE</sequence>
<keyword id="KW-0963">Cytoplasm</keyword>
<keyword id="KW-0460">Magnesium</keyword>
<keyword id="KW-0479">Metal-binding</keyword>
<keyword id="KW-0548">Nucleotidyltransferase</keyword>
<keyword id="KW-0694">RNA-binding</keyword>
<keyword id="KW-0808">Transferase</keyword>
<name>PNP_STRPI</name>
<dbReference type="EC" id="2.7.7.8" evidence="1"/>
<dbReference type="EMBL" id="CP000936">
    <property type="protein sequence ID" value="ACA36702.1"/>
    <property type="molecule type" value="Genomic_DNA"/>
</dbReference>
<dbReference type="RefSeq" id="WP_012291609.1">
    <property type="nucleotide sequence ID" value="NC_010380.1"/>
</dbReference>
<dbReference type="SMR" id="B1IAA9"/>
<dbReference type="KEGG" id="spv:SPH_0686"/>
<dbReference type="HOGENOM" id="CLU_004217_2_2_9"/>
<dbReference type="Proteomes" id="UP000002163">
    <property type="component" value="Chromosome"/>
</dbReference>
<dbReference type="GO" id="GO:0005829">
    <property type="term" value="C:cytosol"/>
    <property type="evidence" value="ECO:0007669"/>
    <property type="project" value="TreeGrafter"/>
</dbReference>
<dbReference type="GO" id="GO:0000175">
    <property type="term" value="F:3'-5'-RNA exonuclease activity"/>
    <property type="evidence" value="ECO:0007669"/>
    <property type="project" value="TreeGrafter"/>
</dbReference>
<dbReference type="GO" id="GO:0000287">
    <property type="term" value="F:magnesium ion binding"/>
    <property type="evidence" value="ECO:0007669"/>
    <property type="project" value="UniProtKB-UniRule"/>
</dbReference>
<dbReference type="GO" id="GO:0004654">
    <property type="term" value="F:polyribonucleotide nucleotidyltransferase activity"/>
    <property type="evidence" value="ECO:0007669"/>
    <property type="project" value="UniProtKB-UniRule"/>
</dbReference>
<dbReference type="GO" id="GO:0003723">
    <property type="term" value="F:RNA binding"/>
    <property type="evidence" value="ECO:0007669"/>
    <property type="project" value="UniProtKB-UniRule"/>
</dbReference>
<dbReference type="GO" id="GO:0006402">
    <property type="term" value="P:mRNA catabolic process"/>
    <property type="evidence" value="ECO:0007669"/>
    <property type="project" value="UniProtKB-UniRule"/>
</dbReference>
<dbReference type="GO" id="GO:0006396">
    <property type="term" value="P:RNA processing"/>
    <property type="evidence" value="ECO:0007669"/>
    <property type="project" value="InterPro"/>
</dbReference>
<dbReference type="CDD" id="cd02393">
    <property type="entry name" value="KH-I_PNPase"/>
    <property type="match status" value="1"/>
</dbReference>
<dbReference type="CDD" id="cd11363">
    <property type="entry name" value="RNase_PH_PNPase_1"/>
    <property type="match status" value="1"/>
</dbReference>
<dbReference type="CDD" id="cd11364">
    <property type="entry name" value="RNase_PH_PNPase_2"/>
    <property type="match status" value="1"/>
</dbReference>
<dbReference type="FunFam" id="2.40.50.140:FF:000023">
    <property type="entry name" value="Polyribonucleotide nucleotidyltransferase"/>
    <property type="match status" value="1"/>
</dbReference>
<dbReference type="FunFam" id="3.30.1370.10:FF:000001">
    <property type="entry name" value="Polyribonucleotide nucleotidyltransferase"/>
    <property type="match status" value="1"/>
</dbReference>
<dbReference type="FunFam" id="3.30.230.70:FF:000001">
    <property type="entry name" value="Polyribonucleotide nucleotidyltransferase"/>
    <property type="match status" value="1"/>
</dbReference>
<dbReference type="FunFam" id="3.30.230.70:FF:000002">
    <property type="entry name" value="Polyribonucleotide nucleotidyltransferase"/>
    <property type="match status" value="1"/>
</dbReference>
<dbReference type="Gene3D" id="3.30.230.70">
    <property type="entry name" value="GHMP Kinase, N-terminal domain"/>
    <property type="match status" value="2"/>
</dbReference>
<dbReference type="Gene3D" id="3.30.1370.10">
    <property type="entry name" value="K Homology domain, type 1"/>
    <property type="match status" value="1"/>
</dbReference>
<dbReference type="Gene3D" id="2.40.50.140">
    <property type="entry name" value="Nucleic acid-binding proteins"/>
    <property type="match status" value="1"/>
</dbReference>
<dbReference type="HAMAP" id="MF_01595">
    <property type="entry name" value="PNPase"/>
    <property type="match status" value="1"/>
</dbReference>
<dbReference type="InterPro" id="IPR001247">
    <property type="entry name" value="ExoRNase_PH_dom1"/>
</dbReference>
<dbReference type="InterPro" id="IPR015847">
    <property type="entry name" value="ExoRNase_PH_dom2"/>
</dbReference>
<dbReference type="InterPro" id="IPR036345">
    <property type="entry name" value="ExoRNase_PH_dom2_sf"/>
</dbReference>
<dbReference type="InterPro" id="IPR004087">
    <property type="entry name" value="KH_dom"/>
</dbReference>
<dbReference type="InterPro" id="IPR004088">
    <property type="entry name" value="KH_dom_type_1"/>
</dbReference>
<dbReference type="InterPro" id="IPR036612">
    <property type="entry name" value="KH_dom_type_1_sf"/>
</dbReference>
<dbReference type="InterPro" id="IPR012340">
    <property type="entry name" value="NA-bd_OB-fold"/>
</dbReference>
<dbReference type="InterPro" id="IPR012162">
    <property type="entry name" value="PNPase"/>
</dbReference>
<dbReference type="InterPro" id="IPR027408">
    <property type="entry name" value="PNPase/RNase_PH_dom_sf"/>
</dbReference>
<dbReference type="InterPro" id="IPR015848">
    <property type="entry name" value="PNPase_PH_RNA-bd_bac/org-type"/>
</dbReference>
<dbReference type="InterPro" id="IPR036456">
    <property type="entry name" value="PNPase_PH_RNA-bd_sf"/>
</dbReference>
<dbReference type="InterPro" id="IPR020568">
    <property type="entry name" value="Ribosomal_Su5_D2-typ_SF"/>
</dbReference>
<dbReference type="InterPro" id="IPR003029">
    <property type="entry name" value="S1_domain"/>
</dbReference>
<dbReference type="NCBIfam" id="TIGR03591">
    <property type="entry name" value="polynuc_phos"/>
    <property type="match status" value="1"/>
</dbReference>
<dbReference type="NCBIfam" id="NF008805">
    <property type="entry name" value="PRK11824.1"/>
    <property type="match status" value="1"/>
</dbReference>
<dbReference type="PANTHER" id="PTHR11252">
    <property type="entry name" value="POLYRIBONUCLEOTIDE NUCLEOTIDYLTRANSFERASE"/>
    <property type="match status" value="1"/>
</dbReference>
<dbReference type="PANTHER" id="PTHR11252:SF0">
    <property type="entry name" value="POLYRIBONUCLEOTIDE NUCLEOTIDYLTRANSFERASE 1, MITOCHONDRIAL"/>
    <property type="match status" value="1"/>
</dbReference>
<dbReference type="Pfam" id="PF00013">
    <property type="entry name" value="KH_1"/>
    <property type="match status" value="1"/>
</dbReference>
<dbReference type="Pfam" id="PF03726">
    <property type="entry name" value="PNPase"/>
    <property type="match status" value="1"/>
</dbReference>
<dbReference type="Pfam" id="PF01138">
    <property type="entry name" value="RNase_PH"/>
    <property type="match status" value="2"/>
</dbReference>
<dbReference type="Pfam" id="PF03725">
    <property type="entry name" value="RNase_PH_C"/>
    <property type="match status" value="2"/>
</dbReference>
<dbReference type="Pfam" id="PF00575">
    <property type="entry name" value="S1"/>
    <property type="match status" value="1"/>
</dbReference>
<dbReference type="PIRSF" id="PIRSF005499">
    <property type="entry name" value="PNPase"/>
    <property type="match status" value="1"/>
</dbReference>
<dbReference type="SMART" id="SM00322">
    <property type="entry name" value="KH"/>
    <property type="match status" value="1"/>
</dbReference>
<dbReference type="SMART" id="SM00316">
    <property type="entry name" value="S1"/>
    <property type="match status" value="1"/>
</dbReference>
<dbReference type="SUPFAM" id="SSF54791">
    <property type="entry name" value="Eukaryotic type KH-domain (KH-domain type I)"/>
    <property type="match status" value="1"/>
</dbReference>
<dbReference type="SUPFAM" id="SSF50249">
    <property type="entry name" value="Nucleic acid-binding proteins"/>
    <property type="match status" value="1"/>
</dbReference>
<dbReference type="SUPFAM" id="SSF46915">
    <property type="entry name" value="Polynucleotide phosphorylase/guanosine pentaphosphate synthase (PNPase/GPSI), domain 3"/>
    <property type="match status" value="1"/>
</dbReference>
<dbReference type="SUPFAM" id="SSF55666">
    <property type="entry name" value="Ribonuclease PH domain 2-like"/>
    <property type="match status" value="2"/>
</dbReference>
<dbReference type="SUPFAM" id="SSF54211">
    <property type="entry name" value="Ribosomal protein S5 domain 2-like"/>
    <property type="match status" value="2"/>
</dbReference>
<dbReference type="PROSITE" id="PS50084">
    <property type="entry name" value="KH_TYPE_1"/>
    <property type="match status" value="1"/>
</dbReference>
<dbReference type="PROSITE" id="PS50126">
    <property type="entry name" value="S1"/>
    <property type="match status" value="1"/>
</dbReference>
<gene>
    <name evidence="1" type="primary">pnp</name>
    <name type="ordered locus">SPH_0686</name>
</gene>
<proteinExistence type="inferred from homology"/>
<protein>
    <recommendedName>
        <fullName evidence="1">Polyribonucleotide nucleotidyltransferase</fullName>
        <ecNumber evidence="1">2.7.7.8</ecNumber>
    </recommendedName>
    <alternativeName>
        <fullName evidence="1">Polynucleotide phosphorylase</fullName>
        <shortName evidence="1">PNPase</shortName>
    </alternativeName>
</protein>
<feature type="chain" id="PRO_1000192496" description="Polyribonucleotide nucleotidyltransferase">
    <location>
        <begin position="1"/>
        <end position="737"/>
    </location>
</feature>
<feature type="domain" description="KH" evidence="1">
    <location>
        <begin position="556"/>
        <end position="615"/>
    </location>
</feature>
<feature type="domain" description="S1 motif" evidence="1">
    <location>
        <begin position="625"/>
        <end position="693"/>
    </location>
</feature>
<feature type="region of interest" description="Disordered" evidence="2">
    <location>
        <begin position="691"/>
        <end position="737"/>
    </location>
</feature>
<feature type="compositionally biased region" description="Basic and acidic residues" evidence="2">
    <location>
        <begin position="700"/>
        <end position="715"/>
    </location>
</feature>
<feature type="compositionally biased region" description="Basic and acidic residues" evidence="2">
    <location>
        <begin position="725"/>
        <end position="737"/>
    </location>
</feature>
<feature type="binding site" evidence="1">
    <location>
        <position position="489"/>
    </location>
    <ligand>
        <name>Mg(2+)</name>
        <dbReference type="ChEBI" id="CHEBI:18420"/>
    </ligand>
</feature>
<feature type="binding site" evidence="1">
    <location>
        <position position="495"/>
    </location>
    <ligand>
        <name>Mg(2+)</name>
        <dbReference type="ChEBI" id="CHEBI:18420"/>
    </ligand>
</feature>
<accession>B1IAA9</accession>